<gene>
    <name evidence="4" type="primary">carA</name>
</gene>
<feature type="chain" id="PRO_0000435660" description="Caffeate CoA-transferase">
    <location>
        <begin position="1"/>
        <end position="524"/>
    </location>
</feature>
<feature type="active site" description="5-glutamyl coenzyme A thioester intermediate" evidence="1">
    <location>
        <position position="323"/>
    </location>
</feature>
<comment type="function">
    <text evidence="3">Involved in caffeate respiration, which consists in the reduction of the C-C double bond of caffeate. CarA catalyzes an energy-saving CoA loop for caffeate activation in the steady state of caffeate respiration. It catalyzes the formation of caffeyl-CoA from caffeate with hydrocaffeyl-CoA as the CoA donor via a ping-pong mechanism. In addition to caffeate, the enzyme can utilize 4-coumarate or ferulate as CoA acceptor. Neither acetyl-CoA nor butyryl-CoA served as the CoA donor.</text>
</comment>
<comment type="catalytic activity">
    <reaction evidence="3">
        <text>hydrocaffeoyl-CoA + (E)-caffeate = 3-(3,4-dihydroxyphenyl)propanoate + (E)-caffeoyl-CoA</text>
        <dbReference type="Rhea" id="RHEA:38027"/>
        <dbReference type="ChEBI" id="CHEBI:57770"/>
        <dbReference type="ChEBI" id="CHEBI:58744"/>
        <dbReference type="ChEBI" id="CHEBI:87136"/>
        <dbReference type="ChEBI" id="CHEBI:87137"/>
        <dbReference type="EC" id="2.8.3.23"/>
    </reaction>
</comment>
<comment type="biophysicochemical properties">
    <kinetics>
        <KM evidence="3">2 uM for hydrocaffeyl-CoA</KM>
        <KM evidence="3">75 uM for caffeate</KM>
        <Vmax evidence="3">125.0 umol/min/mg enzyme</Vmax>
        <text evidence="3">kcat is 120 sec(-1) for transferase activity with caffeate as substrate.</text>
    </kinetics>
    <phDependence>
        <text evidence="3">Optimum pH is 7.5.</text>
    </phDependence>
    <temperatureDependence>
        <text evidence="3">Optimum temperature is 40 degrees Celsius.</text>
    </temperatureDependence>
</comment>
<comment type="subunit">
    <text evidence="3">Homodimer.</text>
</comment>
<comment type="induction">
    <text evidence="2">Induced by cinnamate and sinapate.</text>
</comment>
<comment type="similarity">
    <text evidence="6">Belongs to the 3-oxoacid CoA-transferase family.</text>
</comment>
<organism>
    <name type="scientific">Acetobacterium woodii</name>
    <dbReference type="NCBI Taxonomy" id="33952"/>
    <lineage>
        <taxon>Bacteria</taxon>
        <taxon>Bacillati</taxon>
        <taxon>Bacillota</taxon>
        <taxon>Clostridia</taxon>
        <taxon>Eubacteriales</taxon>
        <taxon>Eubacteriaceae</taxon>
        <taxon>Acetobacterium</taxon>
    </lineage>
</organism>
<keyword id="KW-0808">Transferase</keyword>
<proteinExistence type="evidence at protein level"/>
<protein>
    <recommendedName>
        <fullName evidence="5">Caffeate CoA-transferase</fullName>
        <ecNumber evidence="3">2.8.3.23</ecNumber>
    </recommendedName>
    <alternativeName>
        <fullName evidence="4">Hydrocaffeyl-CoA:caffeate CoA transferase</fullName>
    </alternativeName>
</protein>
<name>CARA_ACEWO</name>
<sequence length="524" mass="56205">MAKFISAKEAAKLIPDGSTVGVAGMGLAGWPEEVAVAIADNFKETGHPCNLTMKQGSAMGDWRERGMTRLGLEGLVTKWSAAHIGSAFAMNDLVRAEKMACHCLPQGVIVNLWREIAAKRPGLITKVGLGTFVDPRLEGGKMNKVTTEDLVELIEFNGEEYLFYKSFKLDVAMLRGTTADENGNITFENEGPINEGLAVAQAAKNSGGIVIVQVEYQALKNTLKPKDVKIPGALVDYVVVATDKNACWQTEGVYYEPAFAGNLRKPLSAIPILPLTERKVMARRAAMELSKGDLVNLGVGIPSDVASIVSEAGYIEEITMTTEIGGFGGIPASLPNFGSSYNAEANIDHGSMFDLYDGGGIDVAVLGLAQADEAGNINVSKFTIPGLGDRLTGPGGFINITQSTQKVVFAGSFNAKCEVEISDGKLIIKKEGRGKKLLKEVEQVTFSGKYAAENGQEILYVTERCVFKLINGKMTVIEIAPGIDLQKDILDQMDFTPAISADLKEMDSGLFSEKWDGLDTIMGK</sequence>
<dbReference type="EC" id="2.8.3.23" evidence="3"/>
<dbReference type="EMBL" id="HQ616211">
    <property type="protein sequence ID" value="ADX43861.1"/>
    <property type="molecule type" value="Genomic_DNA"/>
</dbReference>
<dbReference type="SMR" id="F1CYZ5"/>
<dbReference type="OMA" id="VKTMGQI"/>
<dbReference type="BRENDA" id="2.8.3.23">
    <property type="organism ID" value="52"/>
</dbReference>
<dbReference type="GO" id="GO:0008410">
    <property type="term" value="F:CoA-transferase activity"/>
    <property type="evidence" value="ECO:0007669"/>
    <property type="project" value="InterPro"/>
</dbReference>
<dbReference type="GO" id="GO:0016782">
    <property type="term" value="F:transferase activity, transferring sulphur-containing groups"/>
    <property type="evidence" value="ECO:0000314"/>
    <property type="project" value="UniProtKB"/>
</dbReference>
<dbReference type="GO" id="GO:0046952">
    <property type="term" value="P:ketone body catabolic process"/>
    <property type="evidence" value="ECO:0007669"/>
    <property type="project" value="InterPro"/>
</dbReference>
<dbReference type="Gene3D" id="3.40.1080.10">
    <property type="entry name" value="Glutaconate Coenzyme A-transferase"/>
    <property type="match status" value="2"/>
</dbReference>
<dbReference type="InterPro" id="IPR014388">
    <property type="entry name" value="3-oxoacid_CoA-transferase"/>
</dbReference>
<dbReference type="InterPro" id="IPR004165">
    <property type="entry name" value="CoA_trans_fam_I"/>
</dbReference>
<dbReference type="InterPro" id="IPR037171">
    <property type="entry name" value="NagB/RpiA_transferase-like"/>
</dbReference>
<dbReference type="PANTHER" id="PTHR43293">
    <property type="entry name" value="ACETATE COA-TRANSFERASE YDIF"/>
    <property type="match status" value="1"/>
</dbReference>
<dbReference type="PANTHER" id="PTHR43293:SF1">
    <property type="entry name" value="ACETATE COA-TRANSFERASE YDIF"/>
    <property type="match status" value="1"/>
</dbReference>
<dbReference type="Pfam" id="PF01144">
    <property type="entry name" value="CoA_trans"/>
    <property type="match status" value="1"/>
</dbReference>
<dbReference type="PIRSF" id="PIRSF000858">
    <property type="entry name" value="SCOT-t"/>
    <property type="match status" value="1"/>
</dbReference>
<dbReference type="SMART" id="SM00882">
    <property type="entry name" value="CoA_trans"/>
    <property type="match status" value="2"/>
</dbReference>
<dbReference type="SUPFAM" id="SSF100950">
    <property type="entry name" value="NagB/RpiA/CoA transferase-like"/>
    <property type="match status" value="2"/>
</dbReference>
<accession>F1CYZ5</accession>
<evidence type="ECO:0000255" key="1">
    <source>
        <dbReference type="PROSITE-ProRule" id="PRU10034"/>
    </source>
</evidence>
<evidence type="ECO:0000269" key="2">
    <source>
    </source>
</evidence>
<evidence type="ECO:0000269" key="3">
    <source>
    </source>
</evidence>
<evidence type="ECO:0000303" key="4">
    <source>
    </source>
</evidence>
<evidence type="ECO:0000303" key="5">
    <source>
    </source>
</evidence>
<evidence type="ECO:0000305" key="6"/>
<reference key="1">
    <citation type="journal article" date="2007" name="J. Bacteriol.">
        <title>Dissection of the caffeate respiratory chain in the acetogen Acetobacterium woodii: identification of an Rnf-type NADH dehydrogenase as a potential coupling site.</title>
        <authorList>
            <person name="Imkamp F."/>
            <person name="Biegel E."/>
            <person name="Jayamani E."/>
            <person name="Buckel W."/>
            <person name="Muller V."/>
        </authorList>
    </citation>
    <scope>NUCLEOTIDE SEQUENCE [GENOMIC DNA]</scope>
    <source>
        <strain>DSM1030</strain>
    </source>
</reference>
<reference key="2">
    <citation type="journal article" date="2011" name="J. Bacteriol.">
        <title>A caffeyl-coenzyme A synthetase initiates caffeate activation prior to caffeate reduction in the acetogenic bacterium Acetobacterium woodii.</title>
        <authorList>
            <person name="Hess V."/>
            <person name="Vitt S."/>
            <person name="Muller V."/>
        </authorList>
    </citation>
    <scope>NUCLEOTIDE SEQUENCE [GENOMIC DNA]</scope>
    <scope>INDUCTION</scope>
    <source>
        <strain>DSM1030</strain>
    </source>
</reference>
<reference key="3">
    <citation type="journal article" date="2013" name="Appl. Environ. Microbiol.">
        <title>Caffeate respiration in the acetogenic bacterium Acetobacterium woodii: a coenzyme A loop saves energy for caffeate activation.</title>
        <authorList>
            <person name="Hess V."/>
            <person name="Gonzalez J.M."/>
            <person name="Parthasarathy A."/>
            <person name="Buckel W."/>
            <person name="Mueller V."/>
        </authorList>
    </citation>
    <scope>FUNCTION</scope>
    <scope>CATALYTIC ACTIVITY</scope>
    <scope>BIOPHYSICOCHEMICAL PROPERTIES</scope>
    <scope>SUBSTRATE SPECIFICITY</scope>
    <scope>SUBUNIT</scope>
    <scope>REACTION MECHANISM</scope>
</reference>